<comment type="function">
    <text evidence="2">Endocrine hormone of the central and peripheral nervous systems that binds and activates the G protein-coupled receptors GALR1, GALR2, and GALR3 (By similarity). This small neuropeptide may regulate diverse physiologic functions including contraction of smooth muscle of the gastrointestinal and genitourinary tract, growth hormone and insulin release and adrenal secretion (By similarity).</text>
</comment>
<comment type="subcellular location">
    <subcellularLocation>
        <location evidence="2">Secreted</location>
    </subcellularLocation>
</comment>
<comment type="tissue specificity">
    <text evidence="4">Expressed in retinal progenitor cells and retinal ganglion cells (at protein level).</text>
</comment>
<comment type="similarity">
    <text evidence="5">Belongs to the galanin family.</text>
</comment>
<accession>P47212</accession>
<dbReference type="EMBL" id="L38580">
    <property type="protein sequence ID" value="AAB41545.1"/>
    <property type="molecule type" value="Genomic_DNA"/>
</dbReference>
<dbReference type="EMBL" id="L38576">
    <property type="protein sequence ID" value="AAB41545.1"/>
    <property type="status" value="JOINED"/>
    <property type="molecule type" value="Genomic_DNA"/>
</dbReference>
<dbReference type="EMBL" id="L38577">
    <property type="protein sequence ID" value="AAB41545.1"/>
    <property type="status" value="JOINED"/>
    <property type="molecule type" value="Genomic_DNA"/>
</dbReference>
<dbReference type="EMBL" id="L38578">
    <property type="protein sequence ID" value="AAB41545.1"/>
    <property type="status" value="JOINED"/>
    <property type="molecule type" value="Genomic_DNA"/>
</dbReference>
<dbReference type="EMBL" id="L38579">
    <property type="protein sequence ID" value="AAB41545.1"/>
    <property type="status" value="JOINED"/>
    <property type="molecule type" value="Genomic_DNA"/>
</dbReference>
<dbReference type="EMBL" id="BC044055">
    <property type="protein sequence ID" value="AAH44055.1"/>
    <property type="molecule type" value="mRNA"/>
</dbReference>
<dbReference type="EMBL" id="Z23069">
    <property type="protein sequence ID" value="CAA80610.1"/>
    <property type="molecule type" value="mRNA"/>
</dbReference>
<dbReference type="CCDS" id="CCDS29396.1"/>
<dbReference type="PIR" id="JC5480">
    <property type="entry name" value="JC5480"/>
</dbReference>
<dbReference type="PIR" id="S34301">
    <property type="entry name" value="S34301"/>
</dbReference>
<dbReference type="RefSeq" id="NP_034383.1">
    <property type="nucleotide sequence ID" value="NM_010253.4"/>
</dbReference>
<dbReference type="BMRB" id="P47212"/>
<dbReference type="SMR" id="P47212"/>
<dbReference type="FunCoup" id="P47212">
    <property type="interactions" value="475"/>
</dbReference>
<dbReference type="STRING" id="10090.ENSMUSP00000157515"/>
<dbReference type="iPTMnet" id="P47212"/>
<dbReference type="PhosphoSitePlus" id="P47212"/>
<dbReference type="jPOST" id="P47212"/>
<dbReference type="PaxDb" id="10090-ENSMUSP00000025842"/>
<dbReference type="ProteomicsDB" id="271658"/>
<dbReference type="ABCD" id="P47212">
    <property type="antibodies" value="16 sequenced antibodies"/>
</dbReference>
<dbReference type="Antibodypedia" id="30599">
    <property type="antibodies" value="357 antibodies from 36 providers"/>
</dbReference>
<dbReference type="Ensembl" id="ENSMUST00000237521.2">
    <property type="protein sequence ID" value="ENSMUSP00000157515.2"/>
    <property type="gene ID" value="ENSMUSG00000024907.8"/>
</dbReference>
<dbReference type="GeneID" id="14419"/>
<dbReference type="KEGG" id="mmu:14419"/>
<dbReference type="UCSC" id="uc008fwj.1">
    <property type="organism name" value="mouse"/>
</dbReference>
<dbReference type="AGR" id="MGI:95637"/>
<dbReference type="CTD" id="51083"/>
<dbReference type="MGI" id="MGI:95637">
    <property type="gene designation" value="Gal"/>
</dbReference>
<dbReference type="VEuPathDB" id="HostDB:ENSMUSG00000024907"/>
<dbReference type="eggNOG" id="ENOG502RZ1E">
    <property type="taxonomic scope" value="Eukaryota"/>
</dbReference>
<dbReference type="GeneTree" id="ENSGT00390000009663"/>
<dbReference type="HOGENOM" id="CLU_166244_0_0_1"/>
<dbReference type="InParanoid" id="P47212"/>
<dbReference type="OMA" id="PHAVDSH"/>
<dbReference type="OrthoDB" id="8721537at2759"/>
<dbReference type="PhylomeDB" id="P47212"/>
<dbReference type="TreeFam" id="TF335850"/>
<dbReference type="Reactome" id="R-MMU-375276">
    <property type="pathway name" value="Peptide ligand-binding receptors"/>
</dbReference>
<dbReference type="Reactome" id="R-MMU-418594">
    <property type="pathway name" value="G alpha (i) signalling events"/>
</dbReference>
<dbReference type="BioGRID-ORCS" id="14419">
    <property type="hits" value="1 hit in 79 CRISPR screens"/>
</dbReference>
<dbReference type="ChiTaRS" id="Ggta1">
    <property type="organism name" value="mouse"/>
</dbReference>
<dbReference type="PRO" id="PR:P47212"/>
<dbReference type="Proteomes" id="UP000000589">
    <property type="component" value="Chromosome 19"/>
</dbReference>
<dbReference type="RNAct" id="P47212">
    <property type="molecule type" value="protein"/>
</dbReference>
<dbReference type="Bgee" id="ENSMUSG00000024907">
    <property type="expression patterns" value="Expressed in medial preoptic region and 147 other cell types or tissues"/>
</dbReference>
<dbReference type="ExpressionAtlas" id="P47212">
    <property type="expression patterns" value="baseline and differential"/>
</dbReference>
<dbReference type="GO" id="GO:0005615">
    <property type="term" value="C:extracellular space"/>
    <property type="evidence" value="ECO:0007669"/>
    <property type="project" value="Ensembl"/>
</dbReference>
<dbReference type="GO" id="GO:0043025">
    <property type="term" value="C:neuronal cell body"/>
    <property type="evidence" value="ECO:0007669"/>
    <property type="project" value="Ensembl"/>
</dbReference>
<dbReference type="GO" id="GO:0004966">
    <property type="term" value="F:galanin receptor activity"/>
    <property type="evidence" value="ECO:0000250"/>
    <property type="project" value="UniProtKB"/>
</dbReference>
<dbReference type="GO" id="GO:0005184">
    <property type="term" value="F:neuropeptide hormone activity"/>
    <property type="evidence" value="ECO:0000250"/>
    <property type="project" value="UniProtKB"/>
</dbReference>
<dbReference type="GO" id="GO:0031764">
    <property type="term" value="F:type 1 galanin receptor binding"/>
    <property type="evidence" value="ECO:0000250"/>
    <property type="project" value="UniProtKB"/>
</dbReference>
<dbReference type="GO" id="GO:0031765">
    <property type="term" value="F:type 2 galanin receptor binding"/>
    <property type="evidence" value="ECO:0000250"/>
    <property type="project" value="UniProtKB"/>
</dbReference>
<dbReference type="GO" id="GO:0031766">
    <property type="term" value="F:type 3 galanin receptor binding"/>
    <property type="evidence" value="ECO:0000250"/>
    <property type="project" value="UniProtKB"/>
</dbReference>
<dbReference type="GO" id="GO:0007399">
    <property type="term" value="P:nervous system development"/>
    <property type="evidence" value="ECO:0000315"/>
    <property type="project" value="MGI"/>
</dbReference>
<dbReference type="GO" id="GO:0007218">
    <property type="term" value="P:neuropeptide signaling pathway"/>
    <property type="evidence" value="ECO:0000315"/>
    <property type="project" value="MGI"/>
</dbReference>
<dbReference type="GO" id="GO:0060746">
    <property type="term" value="P:parental behavior"/>
    <property type="evidence" value="ECO:0000314"/>
    <property type="project" value="MGI"/>
</dbReference>
<dbReference type="GO" id="GO:0051464">
    <property type="term" value="P:positive regulation of cortisol secretion"/>
    <property type="evidence" value="ECO:0007669"/>
    <property type="project" value="Ensembl"/>
</dbReference>
<dbReference type="GO" id="GO:0051795">
    <property type="term" value="P:positive regulation of timing of catagen"/>
    <property type="evidence" value="ECO:0007669"/>
    <property type="project" value="Ensembl"/>
</dbReference>
<dbReference type="GO" id="GO:0045944">
    <property type="term" value="P:positive regulation of transcription by RNA polymerase II"/>
    <property type="evidence" value="ECO:0000250"/>
    <property type="project" value="UniProtKB"/>
</dbReference>
<dbReference type="GO" id="GO:0010737">
    <property type="term" value="P:protein kinase A signaling"/>
    <property type="evidence" value="ECO:0007669"/>
    <property type="project" value="Ensembl"/>
</dbReference>
<dbReference type="InterPro" id="IPR008174">
    <property type="entry name" value="Galanin"/>
</dbReference>
<dbReference type="InterPro" id="IPR008175">
    <property type="entry name" value="Galanin_pre"/>
</dbReference>
<dbReference type="InterPro" id="IPR013068">
    <property type="entry name" value="GMAP"/>
</dbReference>
<dbReference type="PANTHER" id="PTHR16839">
    <property type="entry name" value="GALANIN"/>
    <property type="match status" value="1"/>
</dbReference>
<dbReference type="PANTHER" id="PTHR16839:SF1">
    <property type="entry name" value="GALANIN PEPTIDES"/>
    <property type="match status" value="1"/>
</dbReference>
<dbReference type="Pfam" id="PF01296">
    <property type="entry name" value="Galanin"/>
    <property type="match status" value="1"/>
</dbReference>
<dbReference type="Pfam" id="PF06540">
    <property type="entry name" value="GMAP"/>
    <property type="match status" value="1"/>
</dbReference>
<dbReference type="PRINTS" id="PR00273">
    <property type="entry name" value="GALANIN"/>
</dbReference>
<dbReference type="SMART" id="SM00071">
    <property type="entry name" value="Galanin"/>
    <property type="match status" value="1"/>
</dbReference>
<dbReference type="PROSITE" id="PS00861">
    <property type="entry name" value="GALANIN"/>
    <property type="match status" value="1"/>
</dbReference>
<feature type="signal peptide" evidence="3">
    <location>
        <begin position="1"/>
        <end position="19"/>
    </location>
</feature>
<feature type="propeptide" id="PRO_0000010451" evidence="1">
    <location>
        <begin position="20"/>
        <end position="30"/>
    </location>
</feature>
<feature type="peptide" id="PRO_0000010452" description="Galanin" evidence="1">
    <location>
        <begin position="33"/>
        <end position="61"/>
    </location>
</feature>
<feature type="peptide" id="PRO_0000010453" description="Galanin message-associated peptide" evidence="1">
    <location>
        <begin position="65"/>
        <end position="124"/>
    </location>
</feature>
<feature type="modified residue" description="Threonine amide" evidence="1">
    <location>
        <position position="61"/>
    </location>
</feature>
<feature type="modified residue" description="Phosphoserine" evidence="2">
    <location>
        <position position="117"/>
    </location>
</feature>
<feature type="modified residue" description="Phosphoserine" evidence="2">
    <location>
        <position position="118"/>
    </location>
</feature>
<protein>
    <recommendedName>
        <fullName>Galanin peptides</fullName>
    </recommendedName>
    <component>
        <recommendedName>
            <fullName>Galanin</fullName>
        </recommendedName>
    </component>
    <component>
        <recommendedName>
            <fullName>Galanin message-associated peptide</fullName>
            <shortName>GMAP</shortName>
        </recommendedName>
    </component>
</protein>
<sequence length="124" mass="13471">MARGSVILLGWLLLVVTLSATLGLGMPAKEKRGWTLNSAGYLLGPHAIDNHRSFSDKHGLTGKRELQLEVEERRPGSVDVPLPESNIVRTIMEFLSFLHLKEAGALDSLPGIPLATSSEDLEKS</sequence>
<name>GALA_MOUSE</name>
<keyword id="KW-0027">Amidation</keyword>
<keyword id="KW-0165">Cleavage on pair of basic residues</keyword>
<keyword id="KW-0372">Hormone</keyword>
<keyword id="KW-0527">Neuropeptide</keyword>
<keyword id="KW-0597">Phosphoprotein</keyword>
<keyword id="KW-1185">Reference proteome</keyword>
<keyword id="KW-0964">Secreted</keyword>
<keyword id="KW-0732">Signal</keyword>
<gene>
    <name type="primary">Gal</name>
    <name type="synonym">Galn</name>
</gene>
<reference key="1">
    <citation type="journal article" date="1996" name="Gene">
        <title>Molecular cloning and characterisation of the mouse preprogalanin gene.</title>
        <authorList>
            <person name="Kofler B."/>
            <person name="Liu M.L."/>
            <person name="Jacoby A.S."/>
            <person name="Shine J."/>
            <person name="Iismaa T.P."/>
        </authorList>
    </citation>
    <scope>NUCLEOTIDE SEQUENCE [GENOMIC DNA]</scope>
    <source>
        <strain>129</strain>
        <tissue>Liver</tissue>
    </source>
</reference>
<reference key="2">
    <citation type="journal article" date="2004" name="Genome Res.">
        <title>The status, quality, and expansion of the NIH full-length cDNA project: the Mammalian Gene Collection (MGC).</title>
        <authorList>
            <consortium name="The MGC Project Team"/>
        </authorList>
    </citation>
    <scope>NUCLEOTIDE SEQUENCE [LARGE SCALE MRNA]</scope>
    <source>
        <strain>FVB/N</strain>
        <tissue>Colon</tissue>
    </source>
</reference>
<reference key="3">
    <citation type="journal article" date="1995" name="Neurosci. Lett.">
        <title>cDNA sequence, ligand binding, and regulation of galanin/GMAP in mouse brain.</title>
        <authorList>
            <person name="Lundkvist J."/>
            <person name="Land T."/>
            <person name="Kahl U."/>
            <person name="Bedecs K."/>
            <person name="Bartfai T."/>
        </authorList>
    </citation>
    <scope>NUCLEOTIDE SEQUENCE [MRNA] OF 26-124</scope>
    <source>
        <tissue>Hypothalamus</tissue>
    </source>
</reference>
<reference key="4">
    <citation type="journal article" date="2021" name="Sci. Adv.">
        <title>Atoh7-independent specification of retinal ganglion cell identity.</title>
        <authorList>
            <person name="Brodie-Kommit J."/>
            <person name="Clark B.S."/>
            <person name="Shi Q."/>
            <person name="Shiau F."/>
            <person name="Kim D.W."/>
            <person name="Langel J."/>
            <person name="Sheely C."/>
            <person name="Ruzycki P.A."/>
            <person name="Fries M."/>
            <person name="Javed A."/>
            <person name="Cayouette M."/>
            <person name="Schmidt T."/>
            <person name="Badea T."/>
            <person name="Glaser T."/>
            <person name="Zhao H."/>
            <person name="Singer J."/>
            <person name="Blackshaw S."/>
            <person name="Hattar S."/>
        </authorList>
    </citation>
    <scope>TISSUE SPECIFICITY</scope>
</reference>
<organism>
    <name type="scientific">Mus musculus</name>
    <name type="common">Mouse</name>
    <dbReference type="NCBI Taxonomy" id="10090"/>
    <lineage>
        <taxon>Eukaryota</taxon>
        <taxon>Metazoa</taxon>
        <taxon>Chordata</taxon>
        <taxon>Craniata</taxon>
        <taxon>Vertebrata</taxon>
        <taxon>Euteleostomi</taxon>
        <taxon>Mammalia</taxon>
        <taxon>Eutheria</taxon>
        <taxon>Euarchontoglires</taxon>
        <taxon>Glires</taxon>
        <taxon>Rodentia</taxon>
        <taxon>Myomorpha</taxon>
        <taxon>Muroidea</taxon>
        <taxon>Muridae</taxon>
        <taxon>Murinae</taxon>
        <taxon>Mus</taxon>
        <taxon>Mus</taxon>
    </lineage>
</organism>
<proteinExistence type="evidence at protein level"/>
<evidence type="ECO:0000250" key="1"/>
<evidence type="ECO:0000250" key="2">
    <source>
        <dbReference type="UniProtKB" id="P22466"/>
    </source>
</evidence>
<evidence type="ECO:0000255" key="3"/>
<evidence type="ECO:0000269" key="4">
    <source>
    </source>
</evidence>
<evidence type="ECO:0000305" key="5"/>